<accession>Q96MV8</accession>
<accession>B3KVG7</accession>
<accession>Q3SY30</accession>
<accession>Q6UWH3</accession>
<evidence type="ECO:0000250" key="1">
    <source>
        <dbReference type="UniProtKB" id="F1QXD3"/>
    </source>
</evidence>
<evidence type="ECO:0000250" key="2">
    <source>
        <dbReference type="UniProtKB" id="Q2TGJ4"/>
    </source>
</evidence>
<evidence type="ECO:0000250" key="3">
    <source>
        <dbReference type="UniProtKB" id="Q8BGJ0"/>
    </source>
</evidence>
<evidence type="ECO:0000255" key="4">
    <source>
        <dbReference type="PROSITE-ProRule" id="PRU00067"/>
    </source>
</evidence>
<evidence type="ECO:0000256" key="5">
    <source>
        <dbReference type="SAM" id="MobiDB-lite"/>
    </source>
</evidence>
<evidence type="ECO:0000269" key="6">
    <source>
    </source>
</evidence>
<evidence type="ECO:0000269" key="7">
    <source>
    </source>
</evidence>
<evidence type="ECO:0000269" key="8">
    <source>
    </source>
</evidence>
<evidence type="ECO:0000269" key="9">
    <source>
    </source>
</evidence>
<evidence type="ECO:0000269" key="10">
    <source>
    </source>
</evidence>
<evidence type="ECO:0000303" key="11">
    <source>
    </source>
</evidence>
<evidence type="ECO:0000303" key="12">
    <source>
    </source>
</evidence>
<evidence type="ECO:0000305" key="13"/>
<evidence type="ECO:0000312" key="14">
    <source>
        <dbReference type="HGNC" id="HGNC:20342"/>
    </source>
</evidence>
<proteinExistence type="evidence at protein level"/>
<protein>
    <recommendedName>
        <fullName evidence="13">Palmitoyltransferase ZDHHC15</fullName>
        <ecNumber evidence="8">2.3.1.225</ecNumber>
    </recommendedName>
    <alternativeName>
        <fullName evidence="3">Acyltransferase ZDHHC15</fullName>
        <ecNumber evidence="3">2.3.1.-</ecNumber>
    </alternativeName>
    <alternativeName>
        <fullName>Zinc finger DHHC domain-containing protein 15</fullName>
        <shortName>DHHC-15</shortName>
    </alternativeName>
</protein>
<organism>
    <name type="scientific">Homo sapiens</name>
    <name type="common">Human</name>
    <dbReference type="NCBI Taxonomy" id="9606"/>
    <lineage>
        <taxon>Eukaryota</taxon>
        <taxon>Metazoa</taxon>
        <taxon>Chordata</taxon>
        <taxon>Craniata</taxon>
        <taxon>Vertebrata</taxon>
        <taxon>Euteleostomi</taxon>
        <taxon>Mammalia</taxon>
        <taxon>Eutheria</taxon>
        <taxon>Euarchontoglires</taxon>
        <taxon>Primates</taxon>
        <taxon>Haplorrhini</taxon>
        <taxon>Catarrhini</taxon>
        <taxon>Hominidae</taxon>
        <taxon>Homo</taxon>
    </lineage>
</organism>
<name>ZDH15_HUMAN</name>
<keyword id="KW-0012">Acyltransferase</keyword>
<keyword id="KW-0025">Alternative splicing</keyword>
<keyword id="KW-0333">Golgi apparatus</keyword>
<keyword id="KW-0991">Intellectual disability</keyword>
<keyword id="KW-0449">Lipoprotein</keyword>
<keyword id="KW-0472">Membrane</keyword>
<keyword id="KW-0479">Metal-binding</keyword>
<keyword id="KW-0564">Palmitate</keyword>
<keyword id="KW-1267">Proteomics identification</keyword>
<keyword id="KW-1185">Reference proteome</keyword>
<keyword id="KW-0770">Synapse</keyword>
<keyword id="KW-0808">Transferase</keyword>
<keyword id="KW-0812">Transmembrane</keyword>
<keyword id="KW-1133">Transmembrane helix</keyword>
<keyword id="KW-0862">Zinc</keyword>
<comment type="function">
    <text evidence="1 3 8 9 10">Palmitoyltransferase that catalyzes the addition of palmitate onto various protein substrates (PubMed:18817523, PubMed:23034182). Has no stringent fatty acid selectivity and in addition to palmitate can also transfer onto target proteins myristate from tetradecanoyl-CoA and stearate from octadecanoyl-CoA (By similarity). Palmitoylates IGF2R and SORT1, promoting their partitioning to an endosomal membrane subdomain where they can interact with the retromer cargo-selective complex (PubMed:18817523). Thereby, regulates retrograde transport from endosomes to the Golgi apparatus of these lysosomal sorting receptors and plays a role in trafficking of lysosomal proteins (PubMed:18817523). In the nervous system, catalyzes the palmitoylation of DLG4/PSD95 and regulates its synaptic clustering and function in synaptogenesis (By similarity). Could be involved in the differentiation of dopaminergic neurons and the development of the diencephalon (By similarity). Could also catalyze the palmitoylation of GAP43 (By similarity). Could also palmitoylate DNAJC5 and regulate its localization to the Golgi membrane (By similarity). Could also palmitoylate FYN as shown in vitro (PubMed:19956733). May palmitoylate CALHM3 subunit of gustatory voltage-gated ion channels and modulate channel gating and kinetics.</text>
</comment>
<comment type="catalytic activity">
    <reaction evidence="8">
        <text>L-cysteinyl-[protein] + hexadecanoyl-CoA = S-hexadecanoyl-L-cysteinyl-[protein] + CoA</text>
        <dbReference type="Rhea" id="RHEA:36683"/>
        <dbReference type="Rhea" id="RHEA-COMP:10131"/>
        <dbReference type="Rhea" id="RHEA-COMP:11032"/>
        <dbReference type="ChEBI" id="CHEBI:29950"/>
        <dbReference type="ChEBI" id="CHEBI:57287"/>
        <dbReference type="ChEBI" id="CHEBI:57379"/>
        <dbReference type="ChEBI" id="CHEBI:74151"/>
        <dbReference type="EC" id="2.3.1.225"/>
    </reaction>
    <physiologicalReaction direction="left-to-right" evidence="8">
        <dbReference type="Rhea" id="RHEA:36684"/>
    </physiologicalReaction>
</comment>
<comment type="catalytic activity">
    <reaction evidence="3">
        <text>L-cysteinyl-[protein] + tetradecanoyl-CoA = S-tetradecanoyl-L-cysteinyl-[protein] + CoA</text>
        <dbReference type="Rhea" id="RHEA:59736"/>
        <dbReference type="Rhea" id="RHEA-COMP:10131"/>
        <dbReference type="Rhea" id="RHEA-COMP:15433"/>
        <dbReference type="ChEBI" id="CHEBI:29950"/>
        <dbReference type="ChEBI" id="CHEBI:57287"/>
        <dbReference type="ChEBI" id="CHEBI:57385"/>
        <dbReference type="ChEBI" id="CHEBI:143199"/>
    </reaction>
    <physiologicalReaction direction="left-to-right" evidence="3">
        <dbReference type="Rhea" id="RHEA:59737"/>
    </physiologicalReaction>
</comment>
<comment type="catalytic activity">
    <reaction evidence="3">
        <text>L-cysteinyl-[protein] + octadecanoyl-CoA = S-octadecanoyl-L-cysteinyl-[protein] + CoA</text>
        <dbReference type="Rhea" id="RHEA:59740"/>
        <dbReference type="Rhea" id="RHEA-COMP:10131"/>
        <dbReference type="Rhea" id="RHEA-COMP:15434"/>
        <dbReference type="ChEBI" id="CHEBI:29950"/>
        <dbReference type="ChEBI" id="CHEBI:57287"/>
        <dbReference type="ChEBI" id="CHEBI:57394"/>
        <dbReference type="ChEBI" id="CHEBI:143200"/>
    </reaction>
    <physiologicalReaction direction="left-to-right" evidence="3">
        <dbReference type="Rhea" id="RHEA:59741"/>
    </physiologicalReaction>
</comment>
<comment type="interaction">
    <interactant intactId="EBI-12837904">
        <id>Q96MV8</id>
    </interactant>
    <interactant intactId="EBI-17241711">
        <id>P41586-2</id>
        <label>ADCYAP1R1</label>
    </interactant>
    <organismsDiffer>false</organismsDiffer>
    <experiments>3</experiments>
</comment>
<comment type="interaction">
    <interactant intactId="EBI-12837904">
        <id>Q96MV8</id>
    </interactant>
    <interactant intactId="EBI-11343438">
        <id>Q3SXY8</id>
        <label>ARL13B</label>
    </interactant>
    <organismsDiffer>false</organismsDiffer>
    <experiments>3</experiments>
</comment>
<comment type="interaction">
    <interactant intactId="EBI-12837904">
        <id>Q96MV8</id>
    </interactant>
    <interactant intactId="EBI-749464">
        <id>Q12983</id>
        <label>BNIP3</label>
    </interactant>
    <organismsDiffer>false</organismsDiffer>
    <experiments>3</experiments>
</comment>
<comment type="interaction">
    <interactant intactId="EBI-12837904">
        <id>Q96MV8</id>
    </interactant>
    <interactant intactId="EBI-12822627">
        <id>O14523</id>
        <label>C2CD2L</label>
    </interactant>
    <organismsDiffer>false</organismsDiffer>
    <experiments>3</experiments>
</comment>
<comment type="interaction">
    <interactant intactId="EBI-12837904">
        <id>Q96MV8</id>
    </interactant>
    <interactant intactId="EBI-7797864">
        <id>P11912</id>
        <label>CD79A</label>
    </interactant>
    <organismsDiffer>false</organismsDiffer>
    <experiments>3</experiments>
</comment>
<comment type="interaction">
    <interactant intactId="EBI-12837904">
        <id>Q96MV8</id>
    </interactant>
    <interactant intactId="EBI-11478642">
        <id>P08218</id>
        <label>CELA2B</label>
    </interactant>
    <organismsDiffer>false</organismsDiffer>
    <experiments>3</experiments>
</comment>
<comment type="interaction">
    <interactant intactId="EBI-12837904">
        <id>Q96MV8</id>
    </interactant>
    <interactant intactId="EBI-12261896">
        <id>Q5T4B2</id>
        <label>CERCAM</label>
    </interactant>
    <organismsDiffer>false</organismsDiffer>
    <experiments>3</experiments>
</comment>
<comment type="interaction">
    <interactant intactId="EBI-12837904">
        <id>Q96MV8</id>
    </interactant>
    <interactant intactId="EBI-2873246">
        <id>Q8IUN9</id>
        <label>CLEC10A</label>
    </interactant>
    <organismsDiffer>false</organismsDiffer>
    <experiments>3</experiments>
</comment>
<comment type="interaction">
    <interactant intactId="EBI-12837904">
        <id>Q96MV8</id>
    </interactant>
    <interactant intactId="EBI-17274839">
        <id>P58418</id>
        <label>CLRN1</label>
    </interactant>
    <organismsDiffer>false</organismsDiffer>
    <experiments>3</experiments>
</comment>
<comment type="interaction">
    <interactant intactId="EBI-12837904">
        <id>Q96MV8</id>
    </interactant>
    <interactant intactId="EBI-6942903">
        <id>Q96BA8</id>
        <label>CREB3L1</label>
    </interactant>
    <organismsDiffer>false</organismsDiffer>
    <experiments>5</experiments>
</comment>
<comment type="interaction">
    <interactant intactId="EBI-12837904">
        <id>Q96MV8</id>
    </interactant>
    <interactant intactId="EBI-1046040">
        <id>P00387</id>
        <label>CYB5R3</label>
    </interactant>
    <organismsDiffer>false</organismsDiffer>
    <experiments>3</experiments>
</comment>
<comment type="interaction">
    <interactant intactId="EBI-12837904">
        <id>Q96MV8</id>
    </interactant>
    <interactant intactId="EBI-1752413">
        <id>P78329</id>
        <label>CYP4F2</label>
    </interactant>
    <organismsDiffer>false</organismsDiffer>
    <experiments>3</experiments>
</comment>
<comment type="interaction">
    <interactant intactId="EBI-12837904">
        <id>Q96MV8</id>
    </interactant>
    <interactant intactId="EBI-3923585">
        <id>Q8N5I4</id>
        <label>DHRSX</label>
    </interactant>
    <organismsDiffer>false</organismsDiffer>
    <experiments>3</experiments>
</comment>
<comment type="interaction">
    <interactant intactId="EBI-12837904">
        <id>Q96MV8</id>
    </interactant>
    <interactant intactId="EBI-781551">
        <id>Q9Y282</id>
        <label>ERGIC3</label>
    </interactant>
    <organismsDiffer>false</organismsDiffer>
    <experiments>3</experiments>
</comment>
<comment type="interaction">
    <interactant intactId="EBI-12837904">
        <id>Q96MV8</id>
    </interactant>
    <interactant intactId="EBI-12118888">
        <id>Q96D05-2</id>
        <label>FAM241B</label>
    </interactant>
    <organismsDiffer>false</organismsDiffer>
    <experiments>3</experiments>
</comment>
<comment type="interaction">
    <interactant intactId="EBI-12837904">
        <id>Q96MV8</id>
    </interactant>
    <interactant intactId="EBI-11991950">
        <id>Q8WWP7</id>
        <label>GIMAP1</label>
    </interactant>
    <organismsDiffer>false</organismsDiffer>
    <experiments>3</experiments>
</comment>
<comment type="interaction">
    <interactant intactId="EBI-12837904">
        <id>Q96MV8</id>
    </interactant>
    <interactant intactId="EBI-13310443">
        <id>Q2TAP0</id>
        <label>GOLGA7B</label>
    </interactant>
    <organismsDiffer>false</organismsDiffer>
    <experiments>3</experiments>
</comment>
<comment type="interaction">
    <interactant intactId="EBI-12837904">
        <id>Q96MV8</id>
    </interactant>
    <interactant intactId="EBI-13345167">
        <id>Q8TDT2</id>
        <label>GPR152</label>
    </interactant>
    <organismsDiffer>false</organismsDiffer>
    <experiments>3</experiments>
</comment>
<comment type="interaction">
    <interactant intactId="EBI-12837904">
        <id>Q96MV8</id>
    </interactant>
    <interactant intactId="EBI-12268900">
        <id>Q68G75</id>
        <label>LEMD1</label>
    </interactant>
    <organismsDiffer>false</organismsDiffer>
    <experiments>3</experiments>
</comment>
<comment type="interaction">
    <interactant intactId="EBI-12837904">
        <id>Q96MV8</id>
    </interactant>
    <interactant intactId="EBI-750776">
        <id>O95214</id>
        <label>LEPROTL1</label>
    </interactant>
    <organismsDiffer>false</organismsDiffer>
    <experiments>3</experiments>
</comment>
<comment type="interaction">
    <interactant intactId="EBI-12837904">
        <id>Q96MV8</id>
    </interactant>
    <interactant intactId="EBI-2820517">
        <id>Q8TAF8</id>
        <label>LHFPL5</label>
    </interactant>
    <organismsDiffer>false</organismsDiffer>
    <experiments>3</experiments>
</comment>
<comment type="interaction">
    <interactant intactId="EBI-12837904">
        <id>Q96MV8</id>
    </interactant>
    <interactant intactId="EBI-10200825">
        <id>Q8N8F7</id>
        <label>LSMEM1</label>
    </interactant>
    <organismsDiffer>false</organismsDiffer>
    <experiments>3</experiments>
</comment>
<comment type="interaction">
    <interactant intactId="EBI-12837904">
        <id>Q96MV8</id>
    </interactant>
    <interactant intactId="EBI-2816356">
        <id>Q8IX19</id>
        <label>MCEMP1</label>
    </interactant>
    <organismsDiffer>false</organismsDiffer>
    <experiments>3</experiments>
</comment>
<comment type="interaction">
    <interactant intactId="EBI-12837904">
        <id>Q96MV8</id>
    </interactant>
    <interactant intactId="EBI-3923617">
        <id>Q9H2K0</id>
        <label>MTIF3</label>
    </interactant>
    <organismsDiffer>false</organismsDiffer>
    <experiments>3</experiments>
</comment>
<comment type="interaction">
    <interactant intactId="EBI-12837904">
        <id>Q96MV8</id>
    </interactant>
    <interactant intactId="EBI-12051377">
        <id>Q8N912</id>
        <label>NRAC</label>
    </interactant>
    <organismsDiffer>false</organismsDiffer>
    <experiments>3</experiments>
</comment>
<comment type="interaction">
    <interactant intactId="EBI-12837904">
        <id>Q96MV8</id>
    </interactant>
    <interactant intactId="EBI-1054848">
        <id>Q9P0S3</id>
        <label>ORMDL1</label>
    </interactant>
    <organismsDiffer>false</organismsDiffer>
    <experiments>3</experiments>
</comment>
<comment type="interaction">
    <interactant intactId="EBI-12837904">
        <id>Q96MV8</id>
    </interactant>
    <interactant intactId="EBI-11075081">
        <id>Q53FV1</id>
        <label>ORMDL2</label>
    </interactant>
    <organismsDiffer>false</organismsDiffer>
    <experiments>3</experiments>
</comment>
<comment type="interaction">
    <interactant intactId="EBI-12837904">
        <id>Q96MV8</id>
    </interactant>
    <interactant intactId="EBI-981985">
        <id>Q9Y5Y5</id>
        <label>PEX16</label>
    </interactant>
    <organismsDiffer>false</organismsDiffer>
    <experiments>3</experiments>
</comment>
<comment type="interaction">
    <interactant intactId="EBI-12837904">
        <id>Q96MV8</id>
    </interactant>
    <interactant intactId="EBI-3919291">
        <id>Q9Y342</id>
        <label>PLLP</label>
    </interactant>
    <organismsDiffer>false</organismsDiffer>
    <experiments>3</experiments>
</comment>
<comment type="interaction">
    <interactant intactId="EBI-12837904">
        <id>Q96MV8</id>
    </interactant>
    <interactant intactId="EBI-2506064">
        <id>O60831</id>
        <label>PRAF2</label>
    </interactant>
    <organismsDiffer>false</organismsDiffer>
    <experiments>3</experiments>
</comment>
<comment type="interaction">
    <interactant intactId="EBI-12837904">
        <id>Q96MV8</id>
    </interactant>
    <interactant intactId="EBI-3919694">
        <id>P15151</id>
        <label>PVR</label>
    </interactant>
    <organismsDiffer>false</organismsDiffer>
    <experiments>3</experiments>
</comment>
<comment type="interaction">
    <interactant intactId="EBI-12837904">
        <id>Q96MV8</id>
    </interactant>
    <interactant intactId="EBI-8636004">
        <id>Q96GQ5</id>
        <label>RUSF1</label>
    </interactant>
    <organismsDiffer>false</organismsDiffer>
    <experiments>3</experiments>
</comment>
<comment type="interaction">
    <interactant intactId="EBI-12837904">
        <id>Q96MV8</id>
    </interactant>
    <interactant intactId="EBI-1171999">
        <id>Q9BWM7</id>
        <label>SFXN3</label>
    </interactant>
    <organismsDiffer>false</organismsDiffer>
    <experiments>3</experiments>
</comment>
<comment type="interaction">
    <interactant intactId="EBI-12837904">
        <id>Q96MV8</id>
    </interactant>
    <interactant intactId="EBI-18159983">
        <id>Q3KNW5</id>
        <label>SLC10A6</label>
    </interactant>
    <organismsDiffer>false</organismsDiffer>
    <experiments>3</experiments>
</comment>
<comment type="interaction">
    <interactant intactId="EBI-12837904">
        <id>Q96MV8</id>
    </interactant>
    <interactant intactId="EBI-12188413">
        <id>B2RUZ4</id>
        <label>SMIM1</label>
    </interactant>
    <organismsDiffer>false</organismsDiffer>
    <experiments>3</experiments>
</comment>
<comment type="interaction">
    <interactant intactId="EBI-12837904">
        <id>Q96MV8</id>
    </interactant>
    <interactant intactId="EBI-11957067">
        <id>Q6UX34</id>
        <label>SNORC</label>
    </interactant>
    <organismsDiffer>false</organismsDiffer>
    <experiments>3</experiments>
</comment>
<comment type="interaction">
    <interactant intactId="EBI-12837904">
        <id>Q96MV8</id>
    </interactant>
    <interactant intactId="EBI-1394295">
        <id>Q13277</id>
        <label>STX3</label>
    </interactant>
    <organismsDiffer>false</organismsDiffer>
    <experiments>3</experiments>
</comment>
<comment type="interaction">
    <interactant intactId="EBI-12837904">
        <id>Q96MV8</id>
    </interactant>
    <interactant intactId="EBI-18271435">
        <id>Q0VAB0</id>
        <label>TBXA2R</label>
    </interactant>
    <organismsDiffer>false</organismsDiffer>
    <experiments>3</experiments>
</comment>
<comment type="interaction">
    <interactant intactId="EBI-12837904">
        <id>Q96MV8</id>
    </interactant>
    <interactant intactId="EBI-11423693">
        <id>Q9UIK5</id>
        <label>TMEFF2</label>
    </interactant>
    <organismsDiffer>false</organismsDiffer>
    <experiments>3</experiments>
</comment>
<comment type="interaction">
    <interactant intactId="EBI-12837904">
        <id>Q96MV8</id>
    </interactant>
    <interactant intactId="EBI-727322">
        <id>Q9BXJ8</id>
        <label>TMEM120A</label>
    </interactant>
    <organismsDiffer>false</organismsDiffer>
    <experiments>3</experiments>
</comment>
<comment type="interaction">
    <interactant intactId="EBI-12837904">
        <id>Q96MV8</id>
    </interactant>
    <interactant intactId="EBI-10171534">
        <id>A0PK00</id>
        <label>TMEM120B</label>
    </interactant>
    <organismsDiffer>false</organismsDiffer>
    <experiments>3</experiments>
</comment>
<comment type="interaction">
    <interactant intactId="EBI-12837904">
        <id>Q96MV8</id>
    </interactant>
    <interactant intactId="EBI-10694905">
        <id>Q5BJH2-2</id>
        <label>TMEM128</label>
    </interactant>
    <organismsDiffer>false</organismsDiffer>
    <experiments>3</experiments>
</comment>
<comment type="interaction">
    <interactant intactId="EBI-12837904">
        <id>Q96MV8</id>
    </interactant>
    <interactant intactId="EBI-2339195">
        <id>Q9P0S9</id>
        <label>TMEM14C</label>
    </interactant>
    <organismsDiffer>false</organismsDiffer>
    <experiments>3</experiments>
</comment>
<comment type="interaction">
    <interactant intactId="EBI-12837904">
        <id>Q96MV8</id>
    </interactant>
    <interactant intactId="EBI-347385">
        <id>Q9H0R3</id>
        <label>TMEM222</label>
    </interactant>
    <organismsDiffer>false</organismsDiffer>
    <experiments>3</experiments>
</comment>
<comment type="interaction">
    <interactant intactId="EBI-12837904">
        <id>Q96MV8</id>
    </interactant>
    <interactant intactId="EBI-12038591">
        <id>Q69YG0</id>
        <label>TMEM42</label>
    </interactant>
    <organismsDiffer>false</organismsDiffer>
    <experiments>3</experiments>
</comment>
<comment type="interaction">
    <interactant intactId="EBI-12837904">
        <id>Q96MV8</id>
    </interactant>
    <interactant intactId="EBI-18178701">
        <id>Q4KMG9</id>
        <label>TMEM52B</label>
    </interactant>
    <organismsDiffer>false</organismsDiffer>
    <experiments>3</experiments>
</comment>
<comment type="interaction">
    <interactant intactId="EBI-12837904">
        <id>Q96MV8</id>
    </interactant>
    <interactant intactId="EBI-518882">
        <id>O14763</id>
        <label>TNFRSF10B</label>
    </interactant>
    <organismsDiffer>false</organismsDiffer>
    <experiments>6</experiments>
</comment>
<comment type="interaction">
    <interactant intactId="EBI-12837904">
        <id>Q96MV8</id>
    </interactant>
    <interactant intactId="EBI-12003468">
        <id>A0AVG3</id>
        <label>TSNARE1</label>
    </interactant>
    <organismsDiffer>false</organismsDiffer>
    <experiments>3</experiments>
</comment>
<comment type="interaction">
    <interactant intactId="EBI-12837904">
        <id>Q96MV8</id>
    </interactant>
    <interactant intactId="EBI-12261790">
        <id>A0A384ME17</id>
        <label>TUFM</label>
    </interactant>
    <organismsDiffer>false</organismsDiffer>
    <experiments>3</experiments>
</comment>
<comment type="interaction">
    <interactant intactId="EBI-12837904">
        <id>Q96MV8</id>
    </interactant>
    <interactant intactId="EBI-988826">
        <id>Q9Y385</id>
        <label>UBE2J1</label>
    </interactant>
    <organismsDiffer>false</organismsDiffer>
    <experiments>3</experiments>
</comment>
<comment type="interaction">
    <interactant intactId="EBI-12837904">
        <id>Q96MV8</id>
    </interactant>
    <interactant intactId="EBI-10191195">
        <id>O95183</id>
        <label>VAMP5</label>
    </interactant>
    <organismsDiffer>false</organismsDiffer>
    <experiments>3</experiments>
</comment>
<comment type="interaction">
    <interactant intactId="EBI-12837904">
        <id>Q96MV8</id>
    </interactant>
    <interactant intactId="EBI-1188298">
        <id>O95292</id>
        <label>VAPB</label>
    </interactant>
    <organismsDiffer>false</organismsDiffer>
    <experiments>3</experiments>
</comment>
<comment type="interaction">
    <interactant intactId="EBI-12837904">
        <id>Q96MV8</id>
    </interactant>
    <interactant intactId="EBI-751253">
        <id>Q9BSR8</id>
        <label>YIPF4</label>
    </interactant>
    <organismsDiffer>false</organismsDiffer>
    <experiments>3</experiments>
</comment>
<comment type="subcellular location">
    <subcellularLocation>
        <location evidence="7">Golgi apparatus membrane</location>
        <topology evidence="1">Multi-pass membrane protein</topology>
    </subcellularLocation>
    <subcellularLocation>
        <location evidence="2">Postsynaptic density</location>
    </subcellularLocation>
</comment>
<comment type="alternative products">
    <event type="alternative splicing"/>
    <isoform>
        <id>Q96MV8-1</id>
        <name>1</name>
        <sequence type="displayed"/>
    </isoform>
    <isoform>
        <id>Q96MV8-2</id>
        <name>2</name>
        <sequence type="described" ref="VSP_013206 VSP_013207 VSP_013208"/>
    </isoform>
    <isoform>
        <id>Q96MV8-3</id>
        <name>3</name>
        <sequence type="described" ref="VSP_013206"/>
    </isoform>
</comment>
<comment type="tissue specificity">
    <text evidence="6">Expressed in placenta, liver, lung, kidney, heart and brain.</text>
</comment>
<comment type="domain">
    <text evidence="3">The DHHC domain is required for palmitoyltransferase activity.</text>
</comment>
<comment type="PTM">
    <text evidence="1">Autopalmitoylated (in vitro).</text>
</comment>
<comment type="disease" evidence="6">
    <disease id="DI-00737">
        <name>Intellectual developmental disorder, X-linked 91</name>
        <acronym>MRX91</acronym>
        <description>A disorder characterized by significantly below average general intellectual functioning associated with impairments in adaptive behavior and manifested during the developmental period.</description>
        <dbReference type="MIM" id="300577"/>
    </disease>
    <text>The disease may be caused by variants affecting the gene represented in this entry.</text>
</comment>
<comment type="similarity">
    <text evidence="13">Belongs to the DHHC palmitoyltransferase family.</text>
</comment>
<reference key="1">
    <citation type="journal article" date="2003" name="Genome Res.">
        <title>The secreted protein discovery initiative (SPDI), a large-scale effort to identify novel human secreted and transmembrane proteins: a bioinformatics assessment.</title>
        <authorList>
            <person name="Clark H.F."/>
            <person name="Gurney A.L."/>
            <person name="Abaya E."/>
            <person name="Baker K."/>
            <person name="Baldwin D.T."/>
            <person name="Brush J."/>
            <person name="Chen J."/>
            <person name="Chow B."/>
            <person name="Chui C."/>
            <person name="Crowley C."/>
            <person name="Currell B."/>
            <person name="Deuel B."/>
            <person name="Dowd P."/>
            <person name="Eaton D."/>
            <person name="Foster J.S."/>
            <person name="Grimaldi C."/>
            <person name="Gu Q."/>
            <person name="Hass P.E."/>
            <person name="Heldens S."/>
            <person name="Huang A."/>
            <person name="Kim H.S."/>
            <person name="Klimowski L."/>
            <person name="Jin Y."/>
            <person name="Johnson S."/>
            <person name="Lee J."/>
            <person name="Lewis L."/>
            <person name="Liao D."/>
            <person name="Mark M.R."/>
            <person name="Robbie E."/>
            <person name="Sanchez C."/>
            <person name="Schoenfeld J."/>
            <person name="Seshagiri S."/>
            <person name="Simmons L."/>
            <person name="Singh J."/>
            <person name="Smith V."/>
            <person name="Stinson J."/>
            <person name="Vagts A."/>
            <person name="Vandlen R.L."/>
            <person name="Watanabe C."/>
            <person name="Wieand D."/>
            <person name="Woods K."/>
            <person name="Xie M.-H."/>
            <person name="Yansura D.G."/>
            <person name="Yi S."/>
            <person name="Yu G."/>
            <person name="Yuan J."/>
            <person name="Zhang M."/>
            <person name="Zhang Z."/>
            <person name="Goddard A.D."/>
            <person name="Wood W.I."/>
            <person name="Godowski P.J."/>
            <person name="Gray A.M."/>
        </authorList>
    </citation>
    <scope>NUCLEOTIDE SEQUENCE [LARGE SCALE MRNA] (ISOFORM 2)</scope>
</reference>
<reference key="2">
    <citation type="journal article" date="2004" name="Nat. Genet.">
        <title>Complete sequencing and characterization of 21,243 full-length human cDNAs.</title>
        <authorList>
            <person name="Ota T."/>
            <person name="Suzuki Y."/>
            <person name="Nishikawa T."/>
            <person name="Otsuki T."/>
            <person name="Sugiyama T."/>
            <person name="Irie R."/>
            <person name="Wakamatsu A."/>
            <person name="Hayashi K."/>
            <person name="Sato H."/>
            <person name="Nagai K."/>
            <person name="Kimura K."/>
            <person name="Makita H."/>
            <person name="Sekine M."/>
            <person name="Obayashi M."/>
            <person name="Nishi T."/>
            <person name="Shibahara T."/>
            <person name="Tanaka T."/>
            <person name="Ishii S."/>
            <person name="Yamamoto J."/>
            <person name="Saito K."/>
            <person name="Kawai Y."/>
            <person name="Isono Y."/>
            <person name="Nakamura Y."/>
            <person name="Nagahari K."/>
            <person name="Murakami K."/>
            <person name="Yasuda T."/>
            <person name="Iwayanagi T."/>
            <person name="Wagatsuma M."/>
            <person name="Shiratori A."/>
            <person name="Sudo H."/>
            <person name="Hosoiri T."/>
            <person name="Kaku Y."/>
            <person name="Kodaira H."/>
            <person name="Kondo H."/>
            <person name="Sugawara M."/>
            <person name="Takahashi M."/>
            <person name="Kanda K."/>
            <person name="Yokoi T."/>
            <person name="Furuya T."/>
            <person name="Kikkawa E."/>
            <person name="Omura Y."/>
            <person name="Abe K."/>
            <person name="Kamihara K."/>
            <person name="Katsuta N."/>
            <person name="Sato K."/>
            <person name="Tanikawa M."/>
            <person name="Yamazaki M."/>
            <person name="Ninomiya K."/>
            <person name="Ishibashi T."/>
            <person name="Yamashita H."/>
            <person name="Murakawa K."/>
            <person name="Fujimori K."/>
            <person name="Tanai H."/>
            <person name="Kimata M."/>
            <person name="Watanabe M."/>
            <person name="Hiraoka S."/>
            <person name="Chiba Y."/>
            <person name="Ishida S."/>
            <person name="Ono Y."/>
            <person name="Takiguchi S."/>
            <person name="Watanabe S."/>
            <person name="Yosida M."/>
            <person name="Hotuta T."/>
            <person name="Kusano J."/>
            <person name="Kanehori K."/>
            <person name="Takahashi-Fujii A."/>
            <person name="Hara H."/>
            <person name="Tanase T.-O."/>
            <person name="Nomura Y."/>
            <person name="Togiya S."/>
            <person name="Komai F."/>
            <person name="Hara R."/>
            <person name="Takeuchi K."/>
            <person name="Arita M."/>
            <person name="Imose N."/>
            <person name="Musashino K."/>
            <person name="Yuuki H."/>
            <person name="Oshima A."/>
            <person name="Sasaki N."/>
            <person name="Aotsuka S."/>
            <person name="Yoshikawa Y."/>
            <person name="Matsunawa H."/>
            <person name="Ichihara T."/>
            <person name="Shiohata N."/>
            <person name="Sano S."/>
            <person name="Moriya S."/>
            <person name="Momiyama H."/>
            <person name="Satoh N."/>
            <person name="Takami S."/>
            <person name="Terashima Y."/>
            <person name="Suzuki O."/>
            <person name="Nakagawa S."/>
            <person name="Senoh A."/>
            <person name="Mizoguchi H."/>
            <person name="Goto Y."/>
            <person name="Shimizu F."/>
            <person name="Wakebe H."/>
            <person name="Hishigaki H."/>
            <person name="Watanabe T."/>
            <person name="Sugiyama A."/>
            <person name="Takemoto M."/>
            <person name="Kawakami B."/>
            <person name="Yamazaki M."/>
            <person name="Watanabe K."/>
            <person name="Kumagai A."/>
            <person name="Itakura S."/>
            <person name="Fukuzumi Y."/>
            <person name="Fujimori Y."/>
            <person name="Komiyama M."/>
            <person name="Tashiro H."/>
            <person name="Tanigami A."/>
            <person name="Fujiwara T."/>
            <person name="Ono T."/>
            <person name="Yamada K."/>
            <person name="Fujii Y."/>
            <person name="Ozaki K."/>
            <person name="Hirao M."/>
            <person name="Ohmori Y."/>
            <person name="Kawabata A."/>
            <person name="Hikiji T."/>
            <person name="Kobatake N."/>
            <person name="Inagaki H."/>
            <person name="Ikema Y."/>
            <person name="Okamoto S."/>
            <person name="Okitani R."/>
            <person name="Kawakami T."/>
            <person name="Noguchi S."/>
            <person name="Itoh T."/>
            <person name="Shigeta K."/>
            <person name="Senba T."/>
            <person name="Matsumura K."/>
            <person name="Nakajima Y."/>
            <person name="Mizuno T."/>
            <person name="Morinaga M."/>
            <person name="Sasaki M."/>
            <person name="Togashi T."/>
            <person name="Oyama M."/>
            <person name="Hata H."/>
            <person name="Watanabe M."/>
            <person name="Komatsu T."/>
            <person name="Mizushima-Sugano J."/>
            <person name="Satoh T."/>
            <person name="Shirai Y."/>
            <person name="Takahashi Y."/>
            <person name="Nakagawa K."/>
            <person name="Okumura K."/>
            <person name="Nagase T."/>
            <person name="Nomura N."/>
            <person name="Kikuchi H."/>
            <person name="Masuho Y."/>
            <person name="Yamashita R."/>
            <person name="Nakai K."/>
            <person name="Yada T."/>
            <person name="Nakamura Y."/>
            <person name="Ohara O."/>
            <person name="Isogai T."/>
            <person name="Sugano S."/>
        </authorList>
    </citation>
    <scope>NUCLEOTIDE SEQUENCE [LARGE SCALE MRNA] (ISOFORMS 1 AND 3)</scope>
    <source>
        <tissue>Brain</tissue>
        <tissue>Teratocarcinoma</tissue>
    </source>
</reference>
<reference key="3">
    <citation type="journal article" date="2005" name="Nature">
        <title>The DNA sequence of the human X chromosome.</title>
        <authorList>
            <person name="Ross M.T."/>
            <person name="Grafham D.V."/>
            <person name="Coffey A.J."/>
            <person name="Scherer S."/>
            <person name="McLay K."/>
            <person name="Muzny D."/>
            <person name="Platzer M."/>
            <person name="Howell G.R."/>
            <person name="Burrows C."/>
            <person name="Bird C.P."/>
            <person name="Frankish A."/>
            <person name="Lovell F.L."/>
            <person name="Howe K.L."/>
            <person name="Ashurst J.L."/>
            <person name="Fulton R.S."/>
            <person name="Sudbrak R."/>
            <person name="Wen G."/>
            <person name="Jones M.C."/>
            <person name="Hurles M.E."/>
            <person name="Andrews T.D."/>
            <person name="Scott C.E."/>
            <person name="Searle S."/>
            <person name="Ramser J."/>
            <person name="Whittaker A."/>
            <person name="Deadman R."/>
            <person name="Carter N.P."/>
            <person name="Hunt S.E."/>
            <person name="Chen R."/>
            <person name="Cree A."/>
            <person name="Gunaratne P."/>
            <person name="Havlak P."/>
            <person name="Hodgson A."/>
            <person name="Metzker M.L."/>
            <person name="Richards S."/>
            <person name="Scott G."/>
            <person name="Steffen D."/>
            <person name="Sodergren E."/>
            <person name="Wheeler D.A."/>
            <person name="Worley K.C."/>
            <person name="Ainscough R."/>
            <person name="Ambrose K.D."/>
            <person name="Ansari-Lari M.A."/>
            <person name="Aradhya S."/>
            <person name="Ashwell R.I."/>
            <person name="Babbage A.K."/>
            <person name="Bagguley C.L."/>
            <person name="Ballabio A."/>
            <person name="Banerjee R."/>
            <person name="Barker G.E."/>
            <person name="Barlow K.F."/>
            <person name="Barrett I.P."/>
            <person name="Bates K.N."/>
            <person name="Beare D.M."/>
            <person name="Beasley H."/>
            <person name="Beasley O."/>
            <person name="Beck A."/>
            <person name="Bethel G."/>
            <person name="Blechschmidt K."/>
            <person name="Brady N."/>
            <person name="Bray-Allen S."/>
            <person name="Bridgeman A.M."/>
            <person name="Brown A.J."/>
            <person name="Brown M.J."/>
            <person name="Bonnin D."/>
            <person name="Bruford E.A."/>
            <person name="Buhay C."/>
            <person name="Burch P."/>
            <person name="Burford D."/>
            <person name="Burgess J."/>
            <person name="Burrill W."/>
            <person name="Burton J."/>
            <person name="Bye J.M."/>
            <person name="Carder C."/>
            <person name="Carrel L."/>
            <person name="Chako J."/>
            <person name="Chapman J.C."/>
            <person name="Chavez D."/>
            <person name="Chen E."/>
            <person name="Chen G."/>
            <person name="Chen Y."/>
            <person name="Chen Z."/>
            <person name="Chinault C."/>
            <person name="Ciccodicola A."/>
            <person name="Clark S.Y."/>
            <person name="Clarke G."/>
            <person name="Clee C.M."/>
            <person name="Clegg S."/>
            <person name="Clerc-Blankenburg K."/>
            <person name="Clifford K."/>
            <person name="Cobley V."/>
            <person name="Cole C.G."/>
            <person name="Conquer J.S."/>
            <person name="Corby N."/>
            <person name="Connor R.E."/>
            <person name="David R."/>
            <person name="Davies J."/>
            <person name="Davis C."/>
            <person name="Davis J."/>
            <person name="Delgado O."/>
            <person name="Deshazo D."/>
            <person name="Dhami P."/>
            <person name="Ding Y."/>
            <person name="Dinh H."/>
            <person name="Dodsworth S."/>
            <person name="Draper H."/>
            <person name="Dugan-Rocha S."/>
            <person name="Dunham A."/>
            <person name="Dunn M."/>
            <person name="Durbin K.J."/>
            <person name="Dutta I."/>
            <person name="Eades T."/>
            <person name="Ellwood M."/>
            <person name="Emery-Cohen A."/>
            <person name="Errington H."/>
            <person name="Evans K.L."/>
            <person name="Faulkner L."/>
            <person name="Francis F."/>
            <person name="Frankland J."/>
            <person name="Fraser A.E."/>
            <person name="Galgoczy P."/>
            <person name="Gilbert J."/>
            <person name="Gill R."/>
            <person name="Gloeckner G."/>
            <person name="Gregory S.G."/>
            <person name="Gribble S."/>
            <person name="Griffiths C."/>
            <person name="Grocock R."/>
            <person name="Gu Y."/>
            <person name="Gwilliam R."/>
            <person name="Hamilton C."/>
            <person name="Hart E.A."/>
            <person name="Hawes A."/>
            <person name="Heath P.D."/>
            <person name="Heitmann K."/>
            <person name="Hennig S."/>
            <person name="Hernandez J."/>
            <person name="Hinzmann B."/>
            <person name="Ho S."/>
            <person name="Hoffs M."/>
            <person name="Howden P.J."/>
            <person name="Huckle E.J."/>
            <person name="Hume J."/>
            <person name="Hunt P.J."/>
            <person name="Hunt A.R."/>
            <person name="Isherwood J."/>
            <person name="Jacob L."/>
            <person name="Johnson D."/>
            <person name="Jones S."/>
            <person name="de Jong P.J."/>
            <person name="Joseph S.S."/>
            <person name="Keenan S."/>
            <person name="Kelly S."/>
            <person name="Kershaw J.K."/>
            <person name="Khan Z."/>
            <person name="Kioschis P."/>
            <person name="Klages S."/>
            <person name="Knights A.J."/>
            <person name="Kosiura A."/>
            <person name="Kovar-Smith C."/>
            <person name="Laird G.K."/>
            <person name="Langford C."/>
            <person name="Lawlor S."/>
            <person name="Leversha M."/>
            <person name="Lewis L."/>
            <person name="Liu W."/>
            <person name="Lloyd C."/>
            <person name="Lloyd D.M."/>
            <person name="Loulseged H."/>
            <person name="Loveland J.E."/>
            <person name="Lovell J.D."/>
            <person name="Lozado R."/>
            <person name="Lu J."/>
            <person name="Lyne R."/>
            <person name="Ma J."/>
            <person name="Maheshwari M."/>
            <person name="Matthews L.H."/>
            <person name="McDowall J."/>
            <person name="McLaren S."/>
            <person name="McMurray A."/>
            <person name="Meidl P."/>
            <person name="Meitinger T."/>
            <person name="Milne S."/>
            <person name="Miner G."/>
            <person name="Mistry S.L."/>
            <person name="Morgan M."/>
            <person name="Morris S."/>
            <person name="Mueller I."/>
            <person name="Mullikin J.C."/>
            <person name="Nguyen N."/>
            <person name="Nordsiek G."/>
            <person name="Nyakatura G."/>
            <person name="O'dell C.N."/>
            <person name="Okwuonu G."/>
            <person name="Palmer S."/>
            <person name="Pandian R."/>
            <person name="Parker D."/>
            <person name="Parrish J."/>
            <person name="Pasternak S."/>
            <person name="Patel D."/>
            <person name="Pearce A.V."/>
            <person name="Pearson D.M."/>
            <person name="Pelan S.E."/>
            <person name="Perez L."/>
            <person name="Porter K.M."/>
            <person name="Ramsey Y."/>
            <person name="Reichwald K."/>
            <person name="Rhodes S."/>
            <person name="Ridler K.A."/>
            <person name="Schlessinger D."/>
            <person name="Schueler M.G."/>
            <person name="Sehra H.K."/>
            <person name="Shaw-Smith C."/>
            <person name="Shen H."/>
            <person name="Sheridan E.M."/>
            <person name="Shownkeen R."/>
            <person name="Skuce C.D."/>
            <person name="Smith M.L."/>
            <person name="Sotheran E.C."/>
            <person name="Steingruber H.E."/>
            <person name="Steward C.A."/>
            <person name="Storey R."/>
            <person name="Swann R.M."/>
            <person name="Swarbreck D."/>
            <person name="Tabor P.E."/>
            <person name="Taudien S."/>
            <person name="Taylor T."/>
            <person name="Teague B."/>
            <person name="Thomas K."/>
            <person name="Thorpe A."/>
            <person name="Timms K."/>
            <person name="Tracey A."/>
            <person name="Trevanion S."/>
            <person name="Tromans A.C."/>
            <person name="d'Urso M."/>
            <person name="Verduzco D."/>
            <person name="Villasana D."/>
            <person name="Waldron L."/>
            <person name="Wall M."/>
            <person name="Wang Q."/>
            <person name="Warren J."/>
            <person name="Warry G.L."/>
            <person name="Wei X."/>
            <person name="West A."/>
            <person name="Whitehead S.L."/>
            <person name="Whiteley M.N."/>
            <person name="Wilkinson J.E."/>
            <person name="Willey D.L."/>
            <person name="Williams G."/>
            <person name="Williams L."/>
            <person name="Williamson A."/>
            <person name="Williamson H."/>
            <person name="Wilming L."/>
            <person name="Woodmansey R.L."/>
            <person name="Wray P.W."/>
            <person name="Yen J."/>
            <person name="Zhang J."/>
            <person name="Zhou J."/>
            <person name="Zoghbi H."/>
            <person name="Zorilla S."/>
            <person name="Buck D."/>
            <person name="Reinhardt R."/>
            <person name="Poustka A."/>
            <person name="Rosenthal A."/>
            <person name="Lehrach H."/>
            <person name="Meindl A."/>
            <person name="Minx P.J."/>
            <person name="Hillier L.W."/>
            <person name="Willard H.F."/>
            <person name="Wilson R.K."/>
            <person name="Waterston R.H."/>
            <person name="Rice C.M."/>
            <person name="Vaudin M."/>
            <person name="Coulson A."/>
            <person name="Nelson D.L."/>
            <person name="Weinstock G."/>
            <person name="Sulston J.E."/>
            <person name="Durbin R.M."/>
            <person name="Hubbard T."/>
            <person name="Gibbs R.A."/>
            <person name="Beck S."/>
            <person name="Rogers J."/>
            <person name="Bentley D.R."/>
        </authorList>
    </citation>
    <scope>NUCLEOTIDE SEQUENCE [LARGE SCALE GENOMIC DNA]</scope>
</reference>
<reference key="4">
    <citation type="journal article" date="2004" name="Genome Res.">
        <title>The status, quality, and expansion of the NIH full-length cDNA project: the Mammalian Gene Collection (MGC).</title>
        <authorList>
            <consortium name="The MGC Project Team"/>
        </authorList>
    </citation>
    <scope>NUCLEOTIDE SEQUENCE [LARGE SCALE MRNA] (ISOFORM 1)</scope>
</reference>
<reference key="5">
    <citation type="journal article" date="2005" name="Eur. J. Hum. Genet.">
        <title>Loss of ZDHHC15 expression in a woman with a balanced translocation t(X;15)(q13.3;cen) and severe mental retardation.</title>
        <authorList>
            <person name="Mansouri M.R."/>
            <person name="Marklund L."/>
            <person name="Gustavsson P."/>
            <person name="Davey E."/>
            <person name="Carlsson B."/>
            <person name="Larsson C."/>
            <person name="White I."/>
            <person name="Gustavson K.-H."/>
            <person name="Dahl N."/>
        </authorList>
    </citation>
    <scope>TISSUE SPECIFICITY</scope>
    <scope>POSSIBLE INVOLVEMENT IN MRX91</scope>
</reference>
<reference key="6">
    <citation type="journal article" date="2006" name="Biochim. Biophys. Acta">
        <title>Intracellular localization and tissue-specific distribution of human and yeast DHHC cysteine-rich domain-containing proteins.</title>
        <authorList>
            <person name="Ohno Y."/>
            <person name="Kihara A."/>
            <person name="Sano T."/>
            <person name="Igarashi Y."/>
        </authorList>
    </citation>
    <scope>SUBCELLULAR LOCATION</scope>
</reference>
<reference key="7">
    <citation type="journal article" date="2008" name="Traffic">
        <title>Palmitoylation controls recycling in lysosomal sorting and trafficking.</title>
        <authorList>
            <person name="McCormick P.J."/>
            <person name="Dumaresq-Doiron K."/>
            <person name="Pluviose A.S."/>
            <person name="Pichette V."/>
            <person name="Tosato G."/>
            <person name="Lefrancois S."/>
        </authorList>
    </citation>
    <scope>FUNCTION</scope>
    <scope>CATALYTIC ACTIVITY</scope>
</reference>
<reference key="8">
    <citation type="journal article" date="2009" name="PLoS Genet.">
        <title>Palmitoylation regulates epidermal homeostasis and hair follicle differentiation.</title>
        <authorList>
            <person name="Mill P."/>
            <person name="Lee A.W."/>
            <person name="Fukata Y."/>
            <person name="Tsutsumi R."/>
            <person name="Fukata M."/>
            <person name="Keighren M."/>
            <person name="Porter R.M."/>
            <person name="McKie L."/>
            <person name="Smyth I."/>
            <person name="Jackson I.J."/>
        </authorList>
    </citation>
    <scope>FUNCTION</scope>
</reference>
<reference key="9">
    <citation type="journal article" date="2012" name="Mol. Biol. Cell">
        <title>Analysis of substrate specificity of human DHHC protein acyltransferases using a yeast expression system.</title>
        <authorList>
            <person name="Ohno Y."/>
            <person name="Kashio A."/>
            <person name="Ogata R."/>
            <person name="Ishitomi A."/>
            <person name="Yamazaki Y."/>
            <person name="Kihara A."/>
        </authorList>
    </citation>
    <scope>FUNCTION</scope>
</reference>
<dbReference type="EC" id="2.3.1.225" evidence="8"/>
<dbReference type="EC" id="2.3.1.-" evidence="3"/>
<dbReference type="EMBL" id="AY358786">
    <property type="protein sequence ID" value="AAQ89146.1"/>
    <property type="molecule type" value="mRNA"/>
</dbReference>
<dbReference type="EMBL" id="AK056374">
    <property type="protein sequence ID" value="BAB71168.1"/>
    <property type="molecule type" value="mRNA"/>
</dbReference>
<dbReference type="EMBL" id="AK122885">
    <property type="protein sequence ID" value="BAG53779.1"/>
    <property type="molecule type" value="mRNA"/>
</dbReference>
<dbReference type="EMBL" id="AC020717">
    <property type="status" value="NOT_ANNOTATED_CDS"/>
    <property type="molecule type" value="Genomic_DNA"/>
</dbReference>
<dbReference type="EMBL" id="AL137013">
    <property type="status" value="NOT_ANNOTATED_CDS"/>
    <property type="molecule type" value="Genomic_DNA"/>
</dbReference>
<dbReference type="EMBL" id="AL391055">
    <property type="status" value="NOT_ANNOTATED_CDS"/>
    <property type="molecule type" value="Genomic_DNA"/>
</dbReference>
<dbReference type="EMBL" id="BC103980">
    <property type="protein sequence ID" value="AAI03981.1"/>
    <property type="molecule type" value="mRNA"/>
</dbReference>
<dbReference type="EMBL" id="BC103981">
    <property type="protein sequence ID" value="AAI03982.1"/>
    <property type="molecule type" value="mRNA"/>
</dbReference>
<dbReference type="EMBL" id="BC103982">
    <property type="protein sequence ID" value="AAI03983.1"/>
    <property type="molecule type" value="mRNA"/>
</dbReference>
<dbReference type="CCDS" id="CCDS14430.1">
    <molecule id="Q96MV8-1"/>
</dbReference>
<dbReference type="CCDS" id="CCDS55454.1">
    <molecule id="Q96MV8-3"/>
</dbReference>
<dbReference type="RefSeq" id="NP_001139728.1">
    <molecule id="Q96MV8-3"/>
    <property type="nucleotide sequence ID" value="NM_001146256.2"/>
</dbReference>
<dbReference type="RefSeq" id="NP_001139729.1">
    <molecule id="Q96MV8-2"/>
    <property type="nucleotide sequence ID" value="NM_001146257.2"/>
</dbReference>
<dbReference type="RefSeq" id="NP_659406.1">
    <molecule id="Q96MV8-1"/>
    <property type="nucleotide sequence ID" value="NM_144969.3"/>
</dbReference>
<dbReference type="RefSeq" id="XP_006724687.1">
    <molecule id="Q96MV8-1"/>
    <property type="nucleotide sequence ID" value="XM_006724624.5"/>
</dbReference>
<dbReference type="RefSeq" id="XP_047297821.1">
    <molecule id="Q96MV8-1"/>
    <property type="nucleotide sequence ID" value="XM_047441865.1"/>
</dbReference>
<dbReference type="RefSeq" id="XP_047297822.1">
    <molecule id="Q96MV8-3"/>
    <property type="nucleotide sequence ID" value="XM_047441866.1"/>
</dbReference>
<dbReference type="RefSeq" id="XP_047297823.1">
    <molecule id="Q96MV8-3"/>
    <property type="nucleotide sequence ID" value="XM_047441867.1"/>
</dbReference>
<dbReference type="RefSeq" id="XP_054182523.1">
    <molecule id="Q96MV8-1"/>
    <property type="nucleotide sequence ID" value="XM_054326548.1"/>
</dbReference>
<dbReference type="RefSeq" id="XP_054182524.1">
    <molecule id="Q96MV8-3"/>
    <property type="nucleotide sequence ID" value="XM_054326549.1"/>
</dbReference>
<dbReference type="SMR" id="Q96MV8"/>
<dbReference type="BioGRID" id="127719">
    <property type="interactions" value="123"/>
</dbReference>
<dbReference type="FunCoup" id="Q96MV8">
    <property type="interactions" value="866"/>
</dbReference>
<dbReference type="IntAct" id="Q96MV8">
    <property type="interactions" value="54"/>
</dbReference>
<dbReference type="MINT" id="Q96MV8"/>
<dbReference type="STRING" id="9606.ENSP00000362465"/>
<dbReference type="GlyGen" id="Q96MV8">
    <property type="glycosylation" value="2 sites, 1 N-linked glycan (1 site), 1 O-linked glycan (1 site)"/>
</dbReference>
<dbReference type="iPTMnet" id="Q96MV8"/>
<dbReference type="PhosphoSitePlus" id="Q96MV8"/>
<dbReference type="BioMuta" id="ZDHHC15"/>
<dbReference type="DMDM" id="37999855"/>
<dbReference type="MassIVE" id="Q96MV8"/>
<dbReference type="PaxDb" id="9606-ENSP00000362465"/>
<dbReference type="PeptideAtlas" id="Q96MV8"/>
<dbReference type="ProteomicsDB" id="77420">
    <molecule id="Q96MV8-2"/>
</dbReference>
<dbReference type="Antibodypedia" id="13846">
    <property type="antibodies" value="91 antibodies from 21 providers"/>
</dbReference>
<dbReference type="DNASU" id="158866"/>
<dbReference type="Ensembl" id="ENST00000373367.8">
    <molecule id="Q96MV8-1"/>
    <property type="protein sequence ID" value="ENSP00000362465.3"/>
    <property type="gene ID" value="ENSG00000102383.14"/>
</dbReference>
<dbReference type="Ensembl" id="ENST00000541184.1">
    <molecule id="Q96MV8-3"/>
    <property type="protein sequence ID" value="ENSP00000445420.1"/>
    <property type="gene ID" value="ENSG00000102383.14"/>
</dbReference>
<dbReference type="GeneID" id="158866"/>
<dbReference type="KEGG" id="hsa:158866"/>
<dbReference type="MANE-Select" id="ENST00000373367.8">
    <property type="protein sequence ID" value="ENSP00000362465.3"/>
    <property type="RefSeq nucleotide sequence ID" value="NM_144969.3"/>
    <property type="RefSeq protein sequence ID" value="NP_659406.1"/>
</dbReference>
<dbReference type="UCSC" id="uc004ecg.4">
    <molecule id="Q96MV8-1"/>
    <property type="organism name" value="human"/>
</dbReference>
<dbReference type="AGR" id="HGNC:20342"/>
<dbReference type="CTD" id="158866"/>
<dbReference type="DisGeNET" id="158866"/>
<dbReference type="GeneCards" id="ZDHHC15"/>
<dbReference type="HGNC" id="HGNC:20342">
    <property type="gene designation" value="ZDHHC15"/>
</dbReference>
<dbReference type="HPA" id="ENSG00000102383">
    <property type="expression patterns" value="Low tissue specificity"/>
</dbReference>
<dbReference type="MalaCards" id="ZDHHC15"/>
<dbReference type="MIM" id="300576">
    <property type="type" value="gene"/>
</dbReference>
<dbReference type="MIM" id="300577">
    <property type="type" value="phenotype"/>
</dbReference>
<dbReference type="neXtProt" id="NX_Q96MV8"/>
<dbReference type="OpenTargets" id="ENSG00000102383"/>
<dbReference type="PharmGKB" id="PA134945089"/>
<dbReference type="VEuPathDB" id="HostDB:ENSG00000102383"/>
<dbReference type="eggNOG" id="KOG1315">
    <property type="taxonomic scope" value="Eukaryota"/>
</dbReference>
<dbReference type="GeneTree" id="ENSGT00940000158214"/>
<dbReference type="HOGENOM" id="CLU_027721_1_1_1"/>
<dbReference type="InParanoid" id="Q96MV8"/>
<dbReference type="OMA" id="NCYSSFP"/>
<dbReference type="OrthoDB" id="9909019at2759"/>
<dbReference type="PAN-GO" id="Q96MV8">
    <property type="GO annotations" value="6 GO annotations based on evolutionary models"/>
</dbReference>
<dbReference type="PhylomeDB" id="Q96MV8"/>
<dbReference type="TreeFam" id="TF316044"/>
<dbReference type="PathwayCommons" id="Q96MV8"/>
<dbReference type="SignaLink" id="Q96MV8"/>
<dbReference type="BioGRID-ORCS" id="158866">
    <property type="hits" value="8 hits in 772 CRISPR screens"/>
</dbReference>
<dbReference type="ChiTaRS" id="ZDHHC15">
    <property type="organism name" value="human"/>
</dbReference>
<dbReference type="GenomeRNAi" id="158866"/>
<dbReference type="Pharos" id="Q96MV8">
    <property type="development level" value="Tbio"/>
</dbReference>
<dbReference type="PRO" id="PR:Q96MV8"/>
<dbReference type="Proteomes" id="UP000005640">
    <property type="component" value="Chromosome X"/>
</dbReference>
<dbReference type="RNAct" id="Q96MV8">
    <property type="molecule type" value="protein"/>
</dbReference>
<dbReference type="Bgee" id="ENSG00000102383">
    <property type="expression patterns" value="Expressed in primordial germ cell in gonad and 112 other cell types or tissues"/>
</dbReference>
<dbReference type="GO" id="GO:0005783">
    <property type="term" value="C:endoplasmic reticulum"/>
    <property type="evidence" value="ECO:0000318"/>
    <property type="project" value="GO_Central"/>
</dbReference>
<dbReference type="GO" id="GO:0005794">
    <property type="term" value="C:Golgi apparatus"/>
    <property type="evidence" value="ECO:0000314"/>
    <property type="project" value="UniProtKB"/>
</dbReference>
<dbReference type="GO" id="GO:0000139">
    <property type="term" value="C:Golgi membrane"/>
    <property type="evidence" value="ECO:0000250"/>
    <property type="project" value="UniProtKB"/>
</dbReference>
<dbReference type="GO" id="GO:0098794">
    <property type="term" value="C:postsynapse"/>
    <property type="evidence" value="ECO:0000250"/>
    <property type="project" value="UniProtKB"/>
</dbReference>
<dbReference type="GO" id="GO:0014069">
    <property type="term" value="C:postsynaptic density"/>
    <property type="evidence" value="ECO:0007669"/>
    <property type="project" value="UniProtKB-SubCell"/>
</dbReference>
<dbReference type="GO" id="GO:0016409">
    <property type="term" value="F:palmitoyltransferase activity"/>
    <property type="evidence" value="ECO:0000314"/>
    <property type="project" value="UniProtKB"/>
</dbReference>
<dbReference type="GO" id="GO:0019705">
    <property type="term" value="F:protein-cysteine S-myristoyltransferase activity"/>
    <property type="evidence" value="ECO:0007669"/>
    <property type="project" value="RHEA"/>
</dbReference>
<dbReference type="GO" id="GO:0019706">
    <property type="term" value="F:protein-cysteine S-palmitoyltransferase activity"/>
    <property type="evidence" value="ECO:0000314"/>
    <property type="project" value="UniProtKB"/>
</dbReference>
<dbReference type="GO" id="GO:0140439">
    <property type="term" value="F:protein-cysteine S-stearoyltransferase activity"/>
    <property type="evidence" value="ECO:0007669"/>
    <property type="project" value="RHEA"/>
</dbReference>
<dbReference type="GO" id="GO:0008270">
    <property type="term" value="F:zinc ion binding"/>
    <property type="evidence" value="ECO:0000250"/>
    <property type="project" value="UniProtKB"/>
</dbReference>
<dbReference type="GO" id="GO:0018230">
    <property type="term" value="P:peptidyl-L-cysteine S-palmitoylation"/>
    <property type="evidence" value="ECO:0000314"/>
    <property type="project" value="UniProtKB"/>
</dbReference>
<dbReference type="GO" id="GO:1900006">
    <property type="term" value="P:positive regulation of dendrite development"/>
    <property type="evidence" value="ECO:0000250"/>
    <property type="project" value="UniProtKB"/>
</dbReference>
<dbReference type="GO" id="GO:0072657">
    <property type="term" value="P:protein localization to membrane"/>
    <property type="evidence" value="ECO:0000315"/>
    <property type="project" value="UniProtKB"/>
</dbReference>
<dbReference type="GO" id="GO:0062237">
    <property type="term" value="P:protein localization to postsynapse"/>
    <property type="evidence" value="ECO:0000250"/>
    <property type="project" value="UniProtKB"/>
</dbReference>
<dbReference type="GO" id="GO:0018345">
    <property type="term" value="P:protein palmitoylation"/>
    <property type="evidence" value="ECO:0000314"/>
    <property type="project" value="UniProtKB"/>
</dbReference>
<dbReference type="GO" id="GO:0140450">
    <property type="term" value="P:protein targeting to Golgi apparatus"/>
    <property type="evidence" value="ECO:0000315"/>
    <property type="project" value="UniProtKB"/>
</dbReference>
<dbReference type="GO" id="GO:0006612">
    <property type="term" value="P:protein targeting to membrane"/>
    <property type="evidence" value="ECO:0000318"/>
    <property type="project" value="GO_Central"/>
</dbReference>
<dbReference type="GO" id="GO:0061001">
    <property type="term" value="P:regulation of dendritic spine morphogenesis"/>
    <property type="evidence" value="ECO:0000250"/>
    <property type="project" value="UniProtKB"/>
</dbReference>
<dbReference type="GO" id="GO:0016188">
    <property type="term" value="P:synaptic vesicle maturation"/>
    <property type="evidence" value="ECO:0000318"/>
    <property type="project" value="GO_Central"/>
</dbReference>
<dbReference type="InterPro" id="IPR001594">
    <property type="entry name" value="Palmitoyltrfase_DHHC"/>
</dbReference>
<dbReference type="InterPro" id="IPR039859">
    <property type="entry name" value="PFA4/ZDH16/20/ERF2-like"/>
</dbReference>
<dbReference type="PANTHER" id="PTHR12246">
    <property type="entry name" value="PALMITOYLTRANSFERASE ZDHHC16"/>
    <property type="match status" value="1"/>
</dbReference>
<dbReference type="Pfam" id="PF01529">
    <property type="entry name" value="DHHC"/>
    <property type="match status" value="1"/>
</dbReference>
<dbReference type="PROSITE" id="PS50216">
    <property type="entry name" value="DHHC"/>
    <property type="match status" value="1"/>
</dbReference>
<gene>
    <name evidence="14" type="primary">ZDHHC15</name>
    <name type="ORF">UNQ1969/PRO4501</name>
</gene>
<feature type="chain" id="PRO_0000212893" description="Palmitoyltransferase ZDHHC15">
    <location>
        <begin position="1"/>
        <end position="337"/>
    </location>
</feature>
<feature type="topological domain" description="Cytoplasmic" evidence="1">
    <location>
        <begin position="1"/>
        <end position="20"/>
    </location>
</feature>
<feature type="transmembrane region" description="Helical" evidence="1">
    <location>
        <begin position="21"/>
        <end position="41"/>
    </location>
</feature>
<feature type="topological domain" description="Lumenal" evidence="1">
    <location>
        <begin position="42"/>
        <end position="56"/>
    </location>
</feature>
<feature type="transmembrane region" description="Helical" evidence="1">
    <location>
        <begin position="57"/>
        <end position="77"/>
    </location>
</feature>
<feature type="topological domain" description="Cytoplasmic" evidence="1">
    <location>
        <begin position="78"/>
        <end position="172"/>
    </location>
</feature>
<feature type="transmembrane region" description="Helical" evidence="1">
    <location>
        <begin position="173"/>
        <end position="193"/>
    </location>
</feature>
<feature type="topological domain" description="Lumenal" evidence="1">
    <location>
        <begin position="194"/>
        <end position="210"/>
    </location>
</feature>
<feature type="transmembrane region" description="Helical" evidence="1">
    <location>
        <begin position="211"/>
        <end position="234"/>
    </location>
</feature>
<feature type="topological domain" description="Cytoplasmic" evidence="1">
    <location>
        <begin position="235"/>
        <end position="337"/>
    </location>
</feature>
<feature type="domain" description="DHHC" evidence="4">
    <location>
        <begin position="129"/>
        <end position="179"/>
    </location>
</feature>
<feature type="region of interest" description="Disordered" evidence="5">
    <location>
        <begin position="306"/>
        <end position="337"/>
    </location>
</feature>
<feature type="compositionally biased region" description="Acidic residues" evidence="5">
    <location>
        <begin position="312"/>
        <end position="323"/>
    </location>
</feature>
<feature type="compositionally biased region" description="Polar residues" evidence="5">
    <location>
        <begin position="327"/>
        <end position="337"/>
    </location>
</feature>
<feature type="active site" description="S-palmitoyl cysteine intermediate" evidence="4">
    <location>
        <position position="159"/>
    </location>
</feature>
<feature type="binding site" evidence="1">
    <location>
        <position position="131"/>
    </location>
    <ligand>
        <name>Zn(2+)</name>
        <dbReference type="ChEBI" id="CHEBI:29105"/>
        <label>1</label>
    </ligand>
</feature>
<feature type="binding site" evidence="1">
    <location>
        <position position="134"/>
    </location>
    <ligand>
        <name>Zn(2+)</name>
        <dbReference type="ChEBI" id="CHEBI:29105"/>
        <label>1</label>
    </ligand>
</feature>
<feature type="binding site" evidence="1">
    <location>
        <position position="144"/>
    </location>
    <ligand>
        <name>Zn(2+)</name>
        <dbReference type="ChEBI" id="CHEBI:29105"/>
        <label>1</label>
    </ligand>
</feature>
<feature type="binding site" evidence="1">
    <location>
        <position position="145"/>
    </location>
    <ligand>
        <name>Zn(2+)</name>
        <dbReference type="ChEBI" id="CHEBI:29105"/>
        <label>2</label>
    </ligand>
</feature>
<feature type="binding site" evidence="1">
    <location>
        <position position="148"/>
    </location>
    <ligand>
        <name>Zn(2+)</name>
        <dbReference type="ChEBI" id="CHEBI:29105"/>
        <label>2</label>
    </ligand>
</feature>
<feature type="binding site" evidence="1">
    <location>
        <position position="151"/>
    </location>
    <ligand>
        <name>Zn(2+)</name>
        <dbReference type="ChEBI" id="CHEBI:29105"/>
        <label>1</label>
    </ligand>
</feature>
<feature type="binding site" evidence="1">
    <location>
        <position position="158"/>
    </location>
    <ligand>
        <name>Zn(2+)</name>
        <dbReference type="ChEBI" id="CHEBI:29105"/>
        <label>2</label>
    </ligand>
</feature>
<feature type="binding site" evidence="1">
    <location>
        <position position="165"/>
    </location>
    <ligand>
        <name>Zn(2+)</name>
        <dbReference type="ChEBI" id="CHEBI:29105"/>
        <label>2</label>
    </ligand>
</feature>
<feature type="splice variant" id="VSP_013206" description="In isoform 2 and isoform 3." evidence="11 12">
    <location>
        <begin position="46"/>
        <end position="54"/>
    </location>
</feature>
<feature type="splice variant" id="VSP_013207" description="In isoform 2." evidence="11">
    <original>AVRFCDRCHLIKPDRCHHCSVCAMCV</original>
    <variation>GQFIQRQLERQLSKYLRKAKSYMFSN</variation>
    <location>
        <begin position="127"/>
        <end position="152"/>
    </location>
</feature>
<feature type="splice variant" id="VSP_013208" description="In isoform 2." evidence="11">
    <location>
        <begin position="153"/>
        <end position="337"/>
    </location>
</feature>
<sequence length="337" mass="39331">MRRGWKMALSGGLRCCRRVLSWVPVLVIVLVVLWSYYAYVFELCLVTVLSPAEKVIYLILYHAIFVFFTWTYWKSIFTLPQQPNQKFHLSYTDKERYENEERPEVQKQMLVDMAKKLPVYTRTGSGAVRFCDRCHLIKPDRCHHCSVCAMCVLKMDHHCPWVNNCIGFSNYKFFLQFLAYSVLYCLYIATTVFSYFIKYWRGELPSVRSKFHVLFLLFVACMFFVSLVILFGYHCWLVSRNKTTLEAFCTPVFTSGPEKNGFNLGFIKNIQQVFGDKKKFWLIPIGSSPGDGHSFPMRSMNESQNPLLANEETWEDNEDDNQDYPEGSSSLAVETET</sequence>